<reference key="1">
    <citation type="journal article" date="2005" name="Nature">
        <title>Sequencing of Aspergillus nidulans and comparative analysis with A. fumigatus and A. oryzae.</title>
        <authorList>
            <person name="Galagan J.E."/>
            <person name="Calvo S.E."/>
            <person name="Cuomo C."/>
            <person name="Ma L.-J."/>
            <person name="Wortman J.R."/>
            <person name="Batzoglou S."/>
            <person name="Lee S.-I."/>
            <person name="Bastuerkmen M."/>
            <person name="Spevak C.C."/>
            <person name="Clutterbuck J."/>
            <person name="Kapitonov V."/>
            <person name="Jurka J."/>
            <person name="Scazzocchio C."/>
            <person name="Farman M.L."/>
            <person name="Butler J."/>
            <person name="Purcell S."/>
            <person name="Harris S."/>
            <person name="Braus G.H."/>
            <person name="Draht O."/>
            <person name="Busch S."/>
            <person name="D'Enfert C."/>
            <person name="Bouchier C."/>
            <person name="Goldman G.H."/>
            <person name="Bell-Pedersen D."/>
            <person name="Griffiths-Jones S."/>
            <person name="Doonan J.H."/>
            <person name="Yu J."/>
            <person name="Vienken K."/>
            <person name="Pain A."/>
            <person name="Freitag M."/>
            <person name="Selker E.U."/>
            <person name="Archer D.B."/>
            <person name="Penalva M.A."/>
            <person name="Oakley B.R."/>
            <person name="Momany M."/>
            <person name="Tanaka T."/>
            <person name="Kumagai T."/>
            <person name="Asai K."/>
            <person name="Machida M."/>
            <person name="Nierman W.C."/>
            <person name="Denning D.W."/>
            <person name="Caddick M.X."/>
            <person name="Hynes M."/>
            <person name="Paoletti M."/>
            <person name="Fischer R."/>
            <person name="Miller B.L."/>
            <person name="Dyer P.S."/>
            <person name="Sachs M.S."/>
            <person name="Osmani S.A."/>
            <person name="Birren B.W."/>
        </authorList>
    </citation>
    <scope>NUCLEOTIDE SEQUENCE [LARGE SCALE GENOMIC DNA]</scope>
    <source>
        <strain>FGSC A4 / ATCC 38163 / CBS 112.46 / NRRL 194 / M139</strain>
    </source>
</reference>
<reference key="2">
    <citation type="journal article" date="2009" name="Fungal Genet. Biol.">
        <title>The 2008 update of the Aspergillus nidulans genome annotation: a community effort.</title>
        <authorList>
            <person name="Wortman J.R."/>
            <person name="Gilsenan J.M."/>
            <person name="Joardar V."/>
            <person name="Deegan J."/>
            <person name="Clutterbuck J."/>
            <person name="Andersen M.R."/>
            <person name="Archer D."/>
            <person name="Bencina M."/>
            <person name="Braus G."/>
            <person name="Coutinho P."/>
            <person name="von Dohren H."/>
            <person name="Doonan J."/>
            <person name="Driessen A.J."/>
            <person name="Durek P."/>
            <person name="Espeso E."/>
            <person name="Fekete E."/>
            <person name="Flipphi M."/>
            <person name="Estrada C.G."/>
            <person name="Geysens S."/>
            <person name="Goldman G."/>
            <person name="de Groot P.W."/>
            <person name="Hansen K."/>
            <person name="Harris S.D."/>
            <person name="Heinekamp T."/>
            <person name="Helmstaedt K."/>
            <person name="Henrissat B."/>
            <person name="Hofmann G."/>
            <person name="Homan T."/>
            <person name="Horio T."/>
            <person name="Horiuchi H."/>
            <person name="James S."/>
            <person name="Jones M."/>
            <person name="Karaffa L."/>
            <person name="Karanyi Z."/>
            <person name="Kato M."/>
            <person name="Keller N."/>
            <person name="Kelly D.E."/>
            <person name="Kiel J.A."/>
            <person name="Kim J.M."/>
            <person name="van der Klei I.J."/>
            <person name="Klis F.M."/>
            <person name="Kovalchuk A."/>
            <person name="Krasevec N."/>
            <person name="Kubicek C.P."/>
            <person name="Liu B."/>
            <person name="Maccabe A."/>
            <person name="Meyer V."/>
            <person name="Mirabito P."/>
            <person name="Miskei M."/>
            <person name="Mos M."/>
            <person name="Mullins J."/>
            <person name="Nelson D.R."/>
            <person name="Nielsen J."/>
            <person name="Oakley B.R."/>
            <person name="Osmani S.A."/>
            <person name="Pakula T."/>
            <person name="Paszewski A."/>
            <person name="Paulsen I."/>
            <person name="Pilsyk S."/>
            <person name="Pocsi I."/>
            <person name="Punt P.J."/>
            <person name="Ram A.F."/>
            <person name="Ren Q."/>
            <person name="Robellet X."/>
            <person name="Robson G."/>
            <person name="Seiboth B."/>
            <person name="van Solingen P."/>
            <person name="Specht T."/>
            <person name="Sun J."/>
            <person name="Taheri-Talesh N."/>
            <person name="Takeshita N."/>
            <person name="Ussery D."/>
            <person name="vanKuyk P.A."/>
            <person name="Visser H."/>
            <person name="van de Vondervoort P.J."/>
            <person name="de Vries R.P."/>
            <person name="Walton J."/>
            <person name="Xiang X."/>
            <person name="Xiong Y."/>
            <person name="Zeng A.P."/>
            <person name="Brandt B.W."/>
            <person name="Cornell M.J."/>
            <person name="van den Hondel C.A."/>
            <person name="Visser J."/>
            <person name="Oliver S.G."/>
            <person name="Turner G."/>
        </authorList>
    </citation>
    <scope>GENOME REANNOTATION</scope>
    <source>
        <strain>FGSC A4 / ATCC 38163 / CBS 112.46 / NRRL 194 / M139</strain>
    </source>
</reference>
<reference key="3">
    <citation type="journal article" date="1994" name="Appl. Environ. Microbiol.">
        <title>Aspergillus nidulans verA is required for production of the mycotoxin sterigmatocystin.</title>
        <authorList>
            <person name="Keller N.P."/>
            <person name="Kantz N.J."/>
            <person name="Adams T.H."/>
        </authorList>
    </citation>
    <scope>FUNCTION</scope>
    <scope>INDUCTION</scope>
</reference>
<reference key="4">
    <citation type="journal article" date="1995" name="Appl. Environ. Microbiol.">
        <title>StcS, a putative P-450 monooxygenase, is required for the conversion of versicolorin A to sterigmatocystin in Aspergillus nidulans.</title>
        <authorList>
            <person name="Keller N.P."/>
            <person name="Segner S."/>
            <person name="Bhatnagar D."/>
            <person name="Adams T.H."/>
        </authorList>
    </citation>
    <scope>FUNCTION</scope>
</reference>
<reference key="5">
    <citation type="journal article" date="1995" name="J. Bacteriol.">
        <title>Sterigmatocystin biosynthesis in Aspergillus nidulans requires a novel type I polyketide synthase.</title>
        <authorList>
            <person name="Yu J.-H."/>
            <person name="Leonard T.J."/>
        </authorList>
    </citation>
    <scope>FUNCTION</scope>
    <source>
        <strain>FGSC A4 / ATCC 38163 / CBS 112.46 / NRRL 194 / M139</strain>
    </source>
</reference>
<reference key="6">
    <citation type="journal article" date="1996" name="Appl. Environ. Microbiol.">
        <title>Aspergillus nidulans stcP encodes an O-methyltransferase that is required for sterigmatocystin biosynthesis.</title>
        <authorList>
            <person name="Kelkar H.S."/>
            <person name="Keller N.P."/>
            <person name="Adams T.H."/>
        </authorList>
    </citation>
    <scope>FUNCTION</scope>
</reference>
<reference key="7">
    <citation type="journal article" date="1996" name="Proc. Natl. Acad. Sci. U.S.A.">
        <title>Aspergillus has distinct fatty acid synthases for primary and secondary metabolism.</title>
        <authorList>
            <person name="Brown D.W."/>
            <person name="Adams T.H."/>
            <person name="Keller N.P."/>
        </authorList>
    </citation>
    <scope>FUNCTION</scope>
</reference>
<reference key="8">
    <citation type="journal article" date="1996" name="Proc. Natl. Acad. Sci. U.S.A.">
        <title>Twenty-five coregulated transcripts define a sterigmatocystin gene cluster in Aspergillus nidulans.</title>
        <authorList>
            <person name="Brown D.W."/>
            <person name="Yu J.-H."/>
            <person name="Kelkar H.S."/>
            <person name="Fernandes M."/>
            <person name="Nesbitt T.C."/>
            <person name="Keller N.P."/>
            <person name="Adams T.H."/>
            <person name="Leonard T.J."/>
        </authorList>
    </citation>
    <scope>INDUCTION</scope>
    <scope>FUNCTION</scope>
    <scope>PATHWAY</scope>
</reference>
<reference key="9">
    <citation type="journal article" date="1997" name="J. Biol. Chem.">
        <title>Aspergillus nidulans stcL encodes a putative cytochrome P-450 monooxygenase required for bisfuran desaturation during aflatoxin/sterigmatocystin biosynthesis.</title>
        <authorList>
            <person name="Kelkar H.S."/>
            <person name="Skloss T.W."/>
            <person name="Haw J.F."/>
            <person name="Keller N.P."/>
            <person name="Adams T.H."/>
        </authorList>
    </citation>
    <scope>FUNCTION</scope>
</reference>
<reference key="10">
    <citation type="journal article" date="2000" name="Appl. Environ. Microbiol.">
        <title>Requirement of monooxygenase-mediated steps for sterigmatocystin biosynthesis by Aspergillus nidulans.</title>
        <authorList>
            <person name="Keller N.P."/>
            <person name="Watanabe C.M."/>
            <person name="Kelkar H.S."/>
            <person name="Adams T.H."/>
            <person name="Townsend C.A."/>
        </authorList>
    </citation>
    <scope>FUNCTION</scope>
</reference>
<reference key="11">
    <citation type="journal article" date="2012" name="Metabolites">
        <title>Genetics of polyketide metabolism in Aspergillus nidulans.</title>
        <authorList>
            <person name="Klejnstrup M.L."/>
            <person name="Frandsen R.J."/>
            <person name="Holm D.K."/>
            <person name="Nielsen M.T."/>
            <person name="Mortensen U.H."/>
            <person name="Larsen T.O."/>
            <person name="Nielsen J.B."/>
        </authorList>
    </citation>
    <scope>REVIEW ON STERIGMATOCYSTIN BIOSYNTHESIS</scope>
</reference>
<sequence length="305" mass="32640">MEPLDLTCDLTSLNGKSAFITGGASGLGLATARKWAEAGVYITIADIQPPTSPVQPGLAHCFHYVYCDVTSWESQVAAFKSALRFSPSGALDIVACFAGTALAPGNQIDHVLAAGVPSLEVDPPRPSSSVRNIEVNLVGSYFTSWLGLYYLRIPGTGTDPELPSNKCLLFCASIAAYMDSPKASTYPASKFGVRGLFRSTRSQTKQLGVRCNLLAPWFFDSPLIAPIKHAMAARGVDMAKVLTFTSIDACVDAATYCVASPEIHGRALAVQPEGTFDLKDDLEDGWGGNQLRPIMQRRRDAGFDV</sequence>
<comment type="function">
    <text evidence="4 6 7 9 10 11 12 13 17">5'-hydroxyaverantin dehydrogenase; part of the gene cluster that mediates the biosynthesis of sterigmatocystin (ST), a polyketide-derived furanocoumarin which is part of the most toxic and carcinogenic compounds among the known mycotoxins (PubMed:8643646). The first step in the biosynthesis of sterigmatocystin is the production of hexanoate by the fatty acid synthase (FAS) units stcJ and stcK (PubMed:8962148). The polyketide backbone is assembled by the non-reducing polyketide synthase stcA by condensation of the starter hexanoyl-CoA and 7 malonyl-CoA extender units followed by cyclization and release of norsolorinic acid (By similarity). Norsolorinic acid is the first stable intermediate in the biosynthesis of sterigmatocystin and is converted into averantin (AVN) by the ketoreductase stcE which reduces the hexanoate ketone to an alcohol (Probable) (PubMed:8643646). Averantin is then oxidized into 5'-hydroxyaverantin (HAVN) by the cytochrome P450 monooxygenase stcF (PubMed:10618248). 5'-hydroxyaverantin is further converted to 5'-oxyaverantin (OAVN) by the 5'-hydroxyaverantin dehydrogenase stcG (PubMed:24957370). The next step is the conversion of OAVN into averufin (AVF) which is catalyzed by a yet to be identified enzyme (PubMed:24957370). The cytochrome P450 monooxygenase stcB and the flavin-binding monooxygenase stcW are both required for the conversion of averufin to 1-hydroxyversicolorone (PubMed:10618248). The esterase stcI probably catalyzes the formation of versiconal hemiacetal acetate from 1-hydroxyversicolorone (PubMed:24957370). The oxydoreductase stcN then probably catalyzes the biosynthetic step from versiconal to versicolorin B (VERB) (PubMed:24957370). The next step is performed by the versicolorin B desaturase stcL to produce versicolorin A (VERA) (PubMed:8999832). The ketoreductase stcU and the cytochrome P450 monooxygenase stcS are involved in the conversion of versicolorin A to demethylsterigmatocystin (PubMed:7486998). The Baeyer-Villiger oxidas stcQ and the reductase stcR might be involved in the biosynthetic step from versicolorin A to demethylsterigmatocystin (PubMed:24957370). The final step in the biosynthesis of sterigmatocystin is the methylation of demethylsterigmatocystin catalyzed by the methyltransferase stcP (PubMed:8900026).</text>
</comment>
<comment type="catalytic activity">
    <reaction evidence="3">
        <text>(1'S,5'S)-5'-hydroxyaverantin + NAD(+) = (S)-5'-oxoaverantin + NADH + H(+)</text>
        <dbReference type="Rhea" id="RHEA:35475"/>
        <dbReference type="ChEBI" id="CHEBI:15378"/>
        <dbReference type="ChEBI" id="CHEBI:57540"/>
        <dbReference type="ChEBI" id="CHEBI:57945"/>
        <dbReference type="ChEBI" id="CHEBI:77900"/>
        <dbReference type="ChEBI" id="CHEBI:77933"/>
        <dbReference type="EC" id="1.1.1.352"/>
    </reaction>
</comment>
<comment type="catalytic activity">
    <reaction evidence="3">
        <text>(1'S,5'R)-5'-hydroxyaverantin + NAD(+) = (S)-5'-oxoaverantin + NADH + 2 H(+)</text>
        <dbReference type="Rhea" id="RHEA:35479"/>
        <dbReference type="ChEBI" id="CHEBI:15378"/>
        <dbReference type="ChEBI" id="CHEBI:57540"/>
        <dbReference type="ChEBI" id="CHEBI:57945"/>
        <dbReference type="ChEBI" id="CHEBI:71536"/>
        <dbReference type="ChEBI" id="CHEBI:77933"/>
        <dbReference type="EC" id="1.1.1.352"/>
    </reaction>
</comment>
<comment type="pathway">
    <text evidence="9">Mycotoxin biosynthesis; sterigmatocystin biosynthesis.</text>
</comment>
<comment type="induction">
    <text evidence="8 9">The genes forming the sterigmatocystin biosynthesis cluster are co-regulated and induced on oatmeal porridge or the fungal isolates were grown either on oatmeal porridge or in YEC medium (0.2% yeast extract, 5.0% corn steep liquor).</text>
</comment>
<comment type="similarity">
    <text evidence="16">Belongs to the short-chain dehydrogenases/reductases (SDR) family.</text>
</comment>
<keyword id="KW-0521">NADP</keyword>
<keyword id="KW-0560">Oxidoreductase</keyword>
<keyword id="KW-1185">Reference proteome</keyword>
<dbReference type="EC" id="1.1.1.352" evidence="3"/>
<dbReference type="EMBL" id="BN001304">
    <property type="protein sequence ID" value="CBF80169.1"/>
    <property type="molecule type" value="Genomic_DNA"/>
</dbReference>
<dbReference type="EMBL" id="AACD01000132">
    <property type="protein sequence ID" value="EAA61605.1"/>
    <property type="molecule type" value="Genomic_DNA"/>
</dbReference>
<dbReference type="RefSeq" id="XP_681086.1">
    <property type="nucleotide sequence ID" value="XM_675994.1"/>
</dbReference>
<dbReference type="SMR" id="A0A1U8QGV2"/>
<dbReference type="STRING" id="227321.Q5AV63"/>
<dbReference type="EnsemblFungi" id="CBF80169">
    <property type="protein sequence ID" value="CBF80169"/>
    <property type="gene ID" value="ANIA_07817"/>
</dbReference>
<dbReference type="KEGG" id="ani:ANIA_07817"/>
<dbReference type="VEuPathDB" id="FungiDB:AN7817"/>
<dbReference type="eggNOG" id="KOG0725">
    <property type="taxonomic scope" value="Eukaryota"/>
</dbReference>
<dbReference type="HOGENOM" id="CLU_010194_13_3_1"/>
<dbReference type="OMA" id="AVYNTCY"/>
<dbReference type="OrthoDB" id="5371740at2759"/>
<dbReference type="UniPathway" id="UPA00377"/>
<dbReference type="Proteomes" id="UP000000560">
    <property type="component" value="Chromosome IV"/>
</dbReference>
<dbReference type="GO" id="GO:0005739">
    <property type="term" value="C:mitochondrion"/>
    <property type="evidence" value="ECO:0000318"/>
    <property type="project" value="GO_Central"/>
</dbReference>
<dbReference type="GO" id="GO:0008670">
    <property type="term" value="F:2,4-dienoyl-CoA reductase (NADPH) activity"/>
    <property type="evidence" value="ECO:0000318"/>
    <property type="project" value="GO_Central"/>
</dbReference>
<dbReference type="GO" id="GO:0006635">
    <property type="term" value="P:fatty acid beta-oxidation"/>
    <property type="evidence" value="ECO:0000318"/>
    <property type="project" value="GO_Central"/>
</dbReference>
<dbReference type="GO" id="GO:0045461">
    <property type="term" value="P:sterigmatocystin biosynthetic process"/>
    <property type="evidence" value="ECO:0000270"/>
    <property type="project" value="GO_Central"/>
</dbReference>
<dbReference type="Gene3D" id="3.40.50.720">
    <property type="entry name" value="NAD(P)-binding Rossmann-like Domain"/>
    <property type="match status" value="1"/>
</dbReference>
<dbReference type="InterPro" id="IPR036291">
    <property type="entry name" value="NAD(P)-bd_dom_sf"/>
</dbReference>
<dbReference type="InterPro" id="IPR020904">
    <property type="entry name" value="Sc_DH/Rdtase_CS"/>
</dbReference>
<dbReference type="InterPro" id="IPR002347">
    <property type="entry name" value="SDR_fam"/>
</dbReference>
<dbReference type="PANTHER" id="PTHR43658:SF8">
    <property type="entry name" value="17-BETA-HYDROXYSTEROID DEHYDROGENASE 14-RELATED"/>
    <property type="match status" value="1"/>
</dbReference>
<dbReference type="PANTHER" id="PTHR43658">
    <property type="entry name" value="SHORT-CHAIN DEHYDROGENASE/REDUCTASE"/>
    <property type="match status" value="1"/>
</dbReference>
<dbReference type="Pfam" id="PF00106">
    <property type="entry name" value="adh_short"/>
    <property type="match status" value="1"/>
</dbReference>
<dbReference type="PRINTS" id="PR00081">
    <property type="entry name" value="GDHRDH"/>
</dbReference>
<dbReference type="SUPFAM" id="SSF51735">
    <property type="entry name" value="NAD(P)-binding Rossmann-fold domains"/>
    <property type="match status" value="1"/>
</dbReference>
<dbReference type="PROSITE" id="PS00061">
    <property type="entry name" value="ADH_SHORT"/>
    <property type="match status" value="1"/>
</dbReference>
<gene>
    <name evidence="15" type="primary">swtcG</name>
    <name type="ORF">AN7817</name>
</gene>
<name>STCG_EMENI</name>
<proteinExistence type="evidence at transcript level"/>
<protein>
    <recommendedName>
        <fullName evidence="3">5'-hydroxyaverantin dehydrogenase stcG</fullName>
        <shortName evidence="3">HAVN dehydrogenase</shortName>
        <ecNumber evidence="3">1.1.1.352</ecNumber>
    </recommendedName>
    <alternativeName>
        <fullName evidence="14">Sterigmatocystin biosynthesis cluster protein G</fullName>
    </alternativeName>
</protein>
<organism>
    <name type="scientific">Emericella nidulans (strain FGSC A4 / ATCC 38163 / CBS 112.46 / NRRL 194 / M139)</name>
    <name type="common">Aspergillus nidulans</name>
    <dbReference type="NCBI Taxonomy" id="227321"/>
    <lineage>
        <taxon>Eukaryota</taxon>
        <taxon>Fungi</taxon>
        <taxon>Dikarya</taxon>
        <taxon>Ascomycota</taxon>
        <taxon>Pezizomycotina</taxon>
        <taxon>Eurotiomycetes</taxon>
        <taxon>Eurotiomycetidae</taxon>
        <taxon>Eurotiales</taxon>
        <taxon>Aspergillaceae</taxon>
        <taxon>Aspergillus</taxon>
        <taxon>Aspergillus subgen. Nidulantes</taxon>
    </lineage>
</organism>
<accession>A0A1U8QGV2</accession>
<accession>C8VDU1</accession>
<accession>Q5AV63</accession>
<evidence type="ECO:0000250" key="1">
    <source>
        <dbReference type="UniProtKB" id="L0E2Z4"/>
    </source>
</evidence>
<evidence type="ECO:0000250" key="2">
    <source>
        <dbReference type="UniProtKB" id="O93868"/>
    </source>
</evidence>
<evidence type="ECO:0000250" key="3">
    <source>
        <dbReference type="UniProtKB" id="P87017"/>
    </source>
</evidence>
<evidence type="ECO:0000250" key="4">
    <source>
        <dbReference type="UniProtKB" id="Q12053"/>
    </source>
</evidence>
<evidence type="ECO:0000255" key="5">
    <source>
        <dbReference type="PROSITE-ProRule" id="PRU10001"/>
    </source>
</evidence>
<evidence type="ECO:0000269" key="6">
    <source>
    </source>
</evidence>
<evidence type="ECO:0000269" key="7">
    <source>
    </source>
</evidence>
<evidence type="ECO:0000269" key="8">
    <source>
    </source>
</evidence>
<evidence type="ECO:0000269" key="9">
    <source>
    </source>
</evidence>
<evidence type="ECO:0000269" key="10">
    <source>
    </source>
</evidence>
<evidence type="ECO:0000269" key="11">
    <source>
    </source>
</evidence>
<evidence type="ECO:0000269" key="12">
    <source>
    </source>
</evidence>
<evidence type="ECO:0000303" key="13">
    <source>
    </source>
</evidence>
<evidence type="ECO:0000303" key="14">
    <source>
    </source>
</evidence>
<evidence type="ECO:0000303" key="15">
    <source>
    </source>
</evidence>
<evidence type="ECO:0000305" key="16"/>
<evidence type="ECO:0000305" key="17">
    <source>
    </source>
</evidence>
<feature type="chain" id="PRO_0000455265" description="5'-hydroxyaverantin dehydrogenase stcG">
    <location>
        <begin position="1"/>
        <end position="305"/>
    </location>
</feature>
<feature type="active site" description="Proton acceptor" evidence="5">
    <location>
        <position position="186"/>
    </location>
</feature>
<feature type="active site" description="Lowers pKa of active site Tyr" evidence="2">
    <location>
        <position position="190"/>
    </location>
</feature>
<feature type="binding site" evidence="1">
    <location>
        <position position="25"/>
    </location>
    <ligand>
        <name>NADP(+)</name>
        <dbReference type="ChEBI" id="CHEBI:58349"/>
    </ligand>
</feature>
<feature type="binding site" evidence="1">
    <location>
        <position position="27"/>
    </location>
    <ligand>
        <name>NADP(+)</name>
        <dbReference type="ChEBI" id="CHEBI:58349"/>
    </ligand>
</feature>
<feature type="binding site" evidence="1">
    <location>
        <position position="48"/>
    </location>
    <ligand>
        <name>NADP(+)</name>
        <dbReference type="ChEBI" id="CHEBI:58349"/>
    </ligand>
</feature>
<feature type="binding site" evidence="1">
    <location>
        <position position="68"/>
    </location>
    <ligand>
        <name>NADP(+)</name>
        <dbReference type="ChEBI" id="CHEBI:58349"/>
    </ligand>
</feature>
<feature type="binding site" evidence="2">
    <location>
        <position position="186"/>
    </location>
    <ligand>
        <name>NADP(+)</name>
        <dbReference type="ChEBI" id="CHEBI:58349"/>
    </ligand>
</feature>
<feature type="binding site" evidence="2">
    <location>
        <position position="190"/>
    </location>
    <ligand>
        <name>NADP(+)</name>
        <dbReference type="ChEBI" id="CHEBI:58349"/>
    </ligand>
</feature>
<feature type="binding site" evidence="1">
    <location>
        <position position="221"/>
    </location>
    <ligand>
        <name>NADP(+)</name>
        <dbReference type="ChEBI" id="CHEBI:58349"/>
    </ligand>
</feature>